<gene>
    <name evidence="1" type="primary">nrdR</name>
    <name type="ordered locus">Rleg2_1178</name>
</gene>
<accession>B5ZXT9</accession>
<name>NRDR_RHILW</name>
<feature type="chain" id="PRO_1000124537" description="Transcriptional repressor NrdR">
    <location>
        <begin position="1"/>
        <end position="158"/>
    </location>
</feature>
<feature type="domain" description="ATP-cone" evidence="1">
    <location>
        <begin position="49"/>
        <end position="139"/>
    </location>
</feature>
<feature type="zinc finger region" evidence="1">
    <location>
        <begin position="3"/>
        <end position="34"/>
    </location>
</feature>
<feature type="region of interest" description="Disordered" evidence="2">
    <location>
        <begin position="1"/>
        <end position="22"/>
    </location>
</feature>
<feature type="compositionally biased region" description="Basic and acidic residues" evidence="2">
    <location>
        <begin position="11"/>
        <end position="22"/>
    </location>
</feature>
<dbReference type="EMBL" id="CP001191">
    <property type="protein sequence ID" value="ACI54472.1"/>
    <property type="molecule type" value="Genomic_DNA"/>
</dbReference>
<dbReference type="RefSeq" id="WP_003547190.1">
    <property type="nucleotide sequence ID" value="NC_011369.1"/>
</dbReference>
<dbReference type="SMR" id="B5ZXT9"/>
<dbReference type="STRING" id="395492.Rleg2_1178"/>
<dbReference type="GeneID" id="91147965"/>
<dbReference type="KEGG" id="rlt:Rleg2_1178"/>
<dbReference type="eggNOG" id="COG1327">
    <property type="taxonomic scope" value="Bacteria"/>
</dbReference>
<dbReference type="HOGENOM" id="CLU_108412_0_1_5"/>
<dbReference type="Proteomes" id="UP000008330">
    <property type="component" value="Chromosome"/>
</dbReference>
<dbReference type="GO" id="GO:0005524">
    <property type="term" value="F:ATP binding"/>
    <property type="evidence" value="ECO:0007669"/>
    <property type="project" value="UniProtKB-KW"/>
</dbReference>
<dbReference type="GO" id="GO:0003677">
    <property type="term" value="F:DNA binding"/>
    <property type="evidence" value="ECO:0007669"/>
    <property type="project" value="UniProtKB-KW"/>
</dbReference>
<dbReference type="GO" id="GO:0008270">
    <property type="term" value="F:zinc ion binding"/>
    <property type="evidence" value="ECO:0007669"/>
    <property type="project" value="UniProtKB-UniRule"/>
</dbReference>
<dbReference type="GO" id="GO:0045892">
    <property type="term" value="P:negative regulation of DNA-templated transcription"/>
    <property type="evidence" value="ECO:0007669"/>
    <property type="project" value="UniProtKB-UniRule"/>
</dbReference>
<dbReference type="HAMAP" id="MF_00440">
    <property type="entry name" value="NrdR"/>
    <property type="match status" value="1"/>
</dbReference>
<dbReference type="InterPro" id="IPR005144">
    <property type="entry name" value="ATP-cone_dom"/>
</dbReference>
<dbReference type="InterPro" id="IPR055173">
    <property type="entry name" value="NrdR-like_N"/>
</dbReference>
<dbReference type="InterPro" id="IPR003796">
    <property type="entry name" value="RNR_NrdR-like"/>
</dbReference>
<dbReference type="NCBIfam" id="TIGR00244">
    <property type="entry name" value="transcriptional regulator NrdR"/>
    <property type="match status" value="1"/>
</dbReference>
<dbReference type="PANTHER" id="PTHR30455">
    <property type="entry name" value="TRANSCRIPTIONAL REPRESSOR NRDR"/>
    <property type="match status" value="1"/>
</dbReference>
<dbReference type="PANTHER" id="PTHR30455:SF2">
    <property type="entry name" value="TRANSCRIPTIONAL REPRESSOR NRDR"/>
    <property type="match status" value="1"/>
</dbReference>
<dbReference type="Pfam" id="PF03477">
    <property type="entry name" value="ATP-cone"/>
    <property type="match status" value="1"/>
</dbReference>
<dbReference type="Pfam" id="PF22811">
    <property type="entry name" value="Zn_ribbon_NrdR"/>
    <property type="match status" value="1"/>
</dbReference>
<dbReference type="PROSITE" id="PS51161">
    <property type="entry name" value="ATP_CONE"/>
    <property type="match status" value="1"/>
</dbReference>
<sequence>MRCPYCGSEDTQVKDSRPAEDNTSIRRRRICPDCGGRFTTFERVQLRELMVIKKTGRKVPFDRDKLVRSFEVALRKRPVERDRIERAVSGIVRRLESSGETEISSEQIGLQVLEAMKSLDDVGFVRYASVYRDFSLAEDFEKVISEINAKIARDPLDR</sequence>
<reference key="1">
    <citation type="journal article" date="2010" name="Stand. Genomic Sci.">
        <title>Complete genome sequence of Rhizobium leguminosarum bv trifolii strain WSM2304, an effective microsymbiont of the South American clover Trifolium polymorphum.</title>
        <authorList>
            <person name="Reeve W."/>
            <person name="O'Hara G."/>
            <person name="Chain P."/>
            <person name="Ardley J."/>
            <person name="Brau L."/>
            <person name="Nandesena K."/>
            <person name="Tiwari R."/>
            <person name="Malfatti S."/>
            <person name="Kiss H."/>
            <person name="Lapidus A."/>
            <person name="Copeland A."/>
            <person name="Nolan M."/>
            <person name="Land M."/>
            <person name="Ivanova N."/>
            <person name="Mavromatis K."/>
            <person name="Markowitz V."/>
            <person name="Kyrpides N."/>
            <person name="Melino V."/>
            <person name="Denton M."/>
            <person name="Yates R."/>
            <person name="Howieson J."/>
        </authorList>
    </citation>
    <scope>NUCLEOTIDE SEQUENCE [LARGE SCALE GENOMIC DNA]</scope>
    <source>
        <strain>WSM2304</strain>
    </source>
</reference>
<keyword id="KW-0067">ATP-binding</keyword>
<keyword id="KW-0238">DNA-binding</keyword>
<keyword id="KW-0479">Metal-binding</keyword>
<keyword id="KW-0547">Nucleotide-binding</keyword>
<keyword id="KW-1185">Reference proteome</keyword>
<keyword id="KW-0678">Repressor</keyword>
<keyword id="KW-0804">Transcription</keyword>
<keyword id="KW-0805">Transcription regulation</keyword>
<keyword id="KW-0862">Zinc</keyword>
<keyword id="KW-0863">Zinc-finger</keyword>
<protein>
    <recommendedName>
        <fullName evidence="1">Transcriptional repressor NrdR</fullName>
    </recommendedName>
</protein>
<comment type="function">
    <text evidence="1">Negatively regulates transcription of bacterial ribonucleotide reductase nrd genes and operons by binding to NrdR-boxes.</text>
</comment>
<comment type="cofactor">
    <cofactor evidence="1">
        <name>Zn(2+)</name>
        <dbReference type="ChEBI" id="CHEBI:29105"/>
    </cofactor>
    <text evidence="1">Binds 1 zinc ion.</text>
</comment>
<comment type="similarity">
    <text evidence="1">Belongs to the NrdR family.</text>
</comment>
<evidence type="ECO:0000255" key="1">
    <source>
        <dbReference type="HAMAP-Rule" id="MF_00440"/>
    </source>
</evidence>
<evidence type="ECO:0000256" key="2">
    <source>
        <dbReference type="SAM" id="MobiDB-lite"/>
    </source>
</evidence>
<proteinExistence type="inferred from homology"/>
<organism>
    <name type="scientific">Rhizobium leguminosarum bv. trifolii (strain WSM2304)</name>
    <dbReference type="NCBI Taxonomy" id="395492"/>
    <lineage>
        <taxon>Bacteria</taxon>
        <taxon>Pseudomonadati</taxon>
        <taxon>Pseudomonadota</taxon>
        <taxon>Alphaproteobacteria</taxon>
        <taxon>Hyphomicrobiales</taxon>
        <taxon>Rhizobiaceae</taxon>
        <taxon>Rhizobium/Agrobacterium group</taxon>
        <taxon>Rhizobium</taxon>
    </lineage>
</organism>